<sequence>MSGSNPKAAAAASAAGPGGLVAGKEEKKKAGGGVLNRLKARRQAPHHAADDGVGAAVTEQELLALDTIRPEHVLRLSRVTENYLCKPEDNIYSIDFTRFKIRDLETGTVLFEIAKPCVSDQEEDEEEGGGDVDISAGRFVRYQFTPAFLRLRTVGATVEFTVGDKPVSNFRMIERHYFREHLLKNFDFDFGFCIPSSRNTCEHIYEFPQLSEDVIRLMIENPYETRSDSFYFVDNKLIMHNKADYAYNGGQ</sequence>
<feature type="initiator methionine" description="Removed" evidence="6">
    <location>
        <position position="1"/>
    </location>
</feature>
<feature type="chain" id="PRO_0000337228" description="Protein unc-119 homolog B">
    <location>
        <begin position="2"/>
        <end position="251"/>
    </location>
</feature>
<feature type="region of interest" description="Disordered" evidence="2">
    <location>
        <begin position="1"/>
        <end position="28"/>
    </location>
</feature>
<feature type="binding site" evidence="1">
    <location>
        <position position="142"/>
    </location>
    <ligand>
        <name>tetradecanoate</name>
        <dbReference type="ChEBI" id="CHEBI:30807"/>
    </ligand>
</feature>
<feature type="modified residue" description="N-acetylserine" evidence="6">
    <location>
        <position position="2"/>
    </location>
</feature>
<feature type="modified residue" description="N6-acetyllysine" evidence="5">
    <location>
        <position position="24"/>
    </location>
</feature>
<feature type="mutagenesis site" description="Reduced binding to myristoylated proteins; when associated with A-148 and A-207." evidence="3">
    <original>F</original>
    <variation>A</variation>
    <location>
        <position position="144"/>
    </location>
</feature>
<feature type="mutagenesis site" description="Reduced binding to myristoylated proteins; when associated with A-144 and A-207." evidence="3">
    <original>F</original>
    <variation>A</variation>
    <location>
        <position position="148"/>
    </location>
</feature>
<feature type="mutagenesis site" description="Reduced binding to myristoylated proteins; when associated with A-144 and A-148." evidence="3">
    <original>F</original>
    <variation>A</variation>
    <location>
        <position position="207"/>
    </location>
</feature>
<feature type="helix" evidence="7">
    <location>
        <begin position="71"/>
        <end position="74"/>
    </location>
</feature>
<feature type="helix" evidence="7">
    <location>
        <begin position="87"/>
        <end position="89"/>
    </location>
</feature>
<feature type="strand" evidence="7">
    <location>
        <begin position="95"/>
        <end position="103"/>
    </location>
</feature>
<feature type="turn" evidence="7">
    <location>
        <begin position="104"/>
        <end position="106"/>
    </location>
</feature>
<feature type="strand" evidence="7">
    <location>
        <begin position="109"/>
        <end position="113"/>
    </location>
</feature>
<feature type="strand" evidence="7">
    <location>
        <begin position="139"/>
        <end position="144"/>
    </location>
</feature>
<feature type="helix" evidence="7">
    <location>
        <begin position="146"/>
        <end position="150"/>
    </location>
</feature>
<feature type="strand" evidence="7">
    <location>
        <begin position="152"/>
        <end position="161"/>
    </location>
</feature>
<feature type="strand" evidence="7">
    <location>
        <begin position="167"/>
        <end position="178"/>
    </location>
</feature>
<feature type="strand" evidence="7">
    <location>
        <begin position="181"/>
        <end position="193"/>
    </location>
</feature>
<feature type="strand" evidence="7">
    <location>
        <begin position="198"/>
        <end position="206"/>
    </location>
</feature>
<feature type="helix" evidence="7">
    <location>
        <begin position="212"/>
        <end position="220"/>
    </location>
</feature>
<feature type="strand" evidence="7">
    <location>
        <begin position="225"/>
        <end position="233"/>
    </location>
</feature>
<feature type="strand" evidence="7">
    <location>
        <begin position="236"/>
        <end position="247"/>
    </location>
</feature>
<evidence type="ECO:0000250" key="1"/>
<evidence type="ECO:0000256" key="2">
    <source>
        <dbReference type="SAM" id="MobiDB-lite"/>
    </source>
</evidence>
<evidence type="ECO:0000269" key="3">
    <source>
    </source>
</evidence>
<evidence type="ECO:0000305" key="4"/>
<evidence type="ECO:0007744" key="5">
    <source>
    </source>
</evidence>
<evidence type="ECO:0007744" key="6">
    <source>
    </source>
</evidence>
<evidence type="ECO:0007829" key="7">
    <source>
        <dbReference type="PDB" id="7OK7"/>
    </source>
</evidence>
<name>U119B_HUMAN</name>
<reference key="1">
    <citation type="journal article" date="2004" name="Nat. Genet.">
        <title>Complete sequencing and characterization of 21,243 full-length human cDNAs.</title>
        <authorList>
            <person name="Ota T."/>
            <person name="Suzuki Y."/>
            <person name="Nishikawa T."/>
            <person name="Otsuki T."/>
            <person name="Sugiyama T."/>
            <person name="Irie R."/>
            <person name="Wakamatsu A."/>
            <person name="Hayashi K."/>
            <person name="Sato H."/>
            <person name="Nagai K."/>
            <person name="Kimura K."/>
            <person name="Makita H."/>
            <person name="Sekine M."/>
            <person name="Obayashi M."/>
            <person name="Nishi T."/>
            <person name="Shibahara T."/>
            <person name="Tanaka T."/>
            <person name="Ishii S."/>
            <person name="Yamamoto J."/>
            <person name="Saito K."/>
            <person name="Kawai Y."/>
            <person name="Isono Y."/>
            <person name="Nakamura Y."/>
            <person name="Nagahari K."/>
            <person name="Murakami K."/>
            <person name="Yasuda T."/>
            <person name="Iwayanagi T."/>
            <person name="Wagatsuma M."/>
            <person name="Shiratori A."/>
            <person name="Sudo H."/>
            <person name="Hosoiri T."/>
            <person name="Kaku Y."/>
            <person name="Kodaira H."/>
            <person name="Kondo H."/>
            <person name="Sugawara M."/>
            <person name="Takahashi M."/>
            <person name="Kanda K."/>
            <person name="Yokoi T."/>
            <person name="Furuya T."/>
            <person name="Kikkawa E."/>
            <person name="Omura Y."/>
            <person name="Abe K."/>
            <person name="Kamihara K."/>
            <person name="Katsuta N."/>
            <person name="Sato K."/>
            <person name="Tanikawa M."/>
            <person name="Yamazaki M."/>
            <person name="Ninomiya K."/>
            <person name="Ishibashi T."/>
            <person name="Yamashita H."/>
            <person name="Murakawa K."/>
            <person name="Fujimori K."/>
            <person name="Tanai H."/>
            <person name="Kimata M."/>
            <person name="Watanabe M."/>
            <person name="Hiraoka S."/>
            <person name="Chiba Y."/>
            <person name="Ishida S."/>
            <person name="Ono Y."/>
            <person name="Takiguchi S."/>
            <person name="Watanabe S."/>
            <person name="Yosida M."/>
            <person name="Hotuta T."/>
            <person name="Kusano J."/>
            <person name="Kanehori K."/>
            <person name="Takahashi-Fujii A."/>
            <person name="Hara H."/>
            <person name="Tanase T.-O."/>
            <person name="Nomura Y."/>
            <person name="Togiya S."/>
            <person name="Komai F."/>
            <person name="Hara R."/>
            <person name="Takeuchi K."/>
            <person name="Arita M."/>
            <person name="Imose N."/>
            <person name="Musashino K."/>
            <person name="Yuuki H."/>
            <person name="Oshima A."/>
            <person name="Sasaki N."/>
            <person name="Aotsuka S."/>
            <person name="Yoshikawa Y."/>
            <person name="Matsunawa H."/>
            <person name="Ichihara T."/>
            <person name="Shiohata N."/>
            <person name="Sano S."/>
            <person name="Moriya S."/>
            <person name="Momiyama H."/>
            <person name="Satoh N."/>
            <person name="Takami S."/>
            <person name="Terashima Y."/>
            <person name="Suzuki O."/>
            <person name="Nakagawa S."/>
            <person name="Senoh A."/>
            <person name="Mizoguchi H."/>
            <person name="Goto Y."/>
            <person name="Shimizu F."/>
            <person name="Wakebe H."/>
            <person name="Hishigaki H."/>
            <person name="Watanabe T."/>
            <person name="Sugiyama A."/>
            <person name="Takemoto M."/>
            <person name="Kawakami B."/>
            <person name="Yamazaki M."/>
            <person name="Watanabe K."/>
            <person name="Kumagai A."/>
            <person name="Itakura S."/>
            <person name="Fukuzumi Y."/>
            <person name="Fujimori Y."/>
            <person name="Komiyama M."/>
            <person name="Tashiro H."/>
            <person name="Tanigami A."/>
            <person name="Fujiwara T."/>
            <person name="Ono T."/>
            <person name="Yamada K."/>
            <person name="Fujii Y."/>
            <person name="Ozaki K."/>
            <person name="Hirao M."/>
            <person name="Ohmori Y."/>
            <person name="Kawabata A."/>
            <person name="Hikiji T."/>
            <person name="Kobatake N."/>
            <person name="Inagaki H."/>
            <person name="Ikema Y."/>
            <person name="Okamoto S."/>
            <person name="Okitani R."/>
            <person name="Kawakami T."/>
            <person name="Noguchi S."/>
            <person name="Itoh T."/>
            <person name="Shigeta K."/>
            <person name="Senba T."/>
            <person name="Matsumura K."/>
            <person name="Nakajima Y."/>
            <person name="Mizuno T."/>
            <person name="Morinaga M."/>
            <person name="Sasaki M."/>
            <person name="Togashi T."/>
            <person name="Oyama M."/>
            <person name="Hata H."/>
            <person name="Watanabe M."/>
            <person name="Komatsu T."/>
            <person name="Mizushima-Sugano J."/>
            <person name="Satoh T."/>
            <person name="Shirai Y."/>
            <person name="Takahashi Y."/>
            <person name="Nakagawa K."/>
            <person name="Okumura K."/>
            <person name="Nagase T."/>
            <person name="Nomura N."/>
            <person name="Kikuchi H."/>
            <person name="Masuho Y."/>
            <person name="Yamashita R."/>
            <person name="Nakai K."/>
            <person name="Yada T."/>
            <person name="Nakamura Y."/>
            <person name="Ohara O."/>
            <person name="Isogai T."/>
            <person name="Sugano S."/>
        </authorList>
    </citation>
    <scope>NUCLEOTIDE SEQUENCE [LARGE SCALE MRNA]</scope>
    <source>
        <tissue>Uterus</tissue>
    </source>
</reference>
<reference key="2">
    <citation type="journal article" date="2006" name="Nature">
        <title>The finished DNA sequence of human chromosome 12.</title>
        <authorList>
            <person name="Scherer S.E."/>
            <person name="Muzny D.M."/>
            <person name="Buhay C.J."/>
            <person name="Chen R."/>
            <person name="Cree A."/>
            <person name="Ding Y."/>
            <person name="Dugan-Rocha S."/>
            <person name="Gill R."/>
            <person name="Gunaratne P."/>
            <person name="Harris R.A."/>
            <person name="Hawes A.C."/>
            <person name="Hernandez J."/>
            <person name="Hodgson A.V."/>
            <person name="Hume J."/>
            <person name="Jackson A."/>
            <person name="Khan Z.M."/>
            <person name="Kovar-Smith C."/>
            <person name="Lewis L.R."/>
            <person name="Lozado R.J."/>
            <person name="Metzker M.L."/>
            <person name="Milosavljevic A."/>
            <person name="Miner G.R."/>
            <person name="Montgomery K.T."/>
            <person name="Morgan M.B."/>
            <person name="Nazareth L.V."/>
            <person name="Scott G."/>
            <person name="Sodergren E."/>
            <person name="Song X.-Z."/>
            <person name="Steffen D."/>
            <person name="Lovering R.C."/>
            <person name="Wheeler D.A."/>
            <person name="Worley K.C."/>
            <person name="Yuan Y."/>
            <person name="Zhang Z."/>
            <person name="Adams C.Q."/>
            <person name="Ansari-Lari M.A."/>
            <person name="Ayele M."/>
            <person name="Brown M.J."/>
            <person name="Chen G."/>
            <person name="Chen Z."/>
            <person name="Clerc-Blankenburg K.P."/>
            <person name="Davis C."/>
            <person name="Delgado O."/>
            <person name="Dinh H.H."/>
            <person name="Draper H."/>
            <person name="Gonzalez-Garay M.L."/>
            <person name="Havlak P."/>
            <person name="Jackson L.R."/>
            <person name="Jacob L.S."/>
            <person name="Kelly S.H."/>
            <person name="Li L."/>
            <person name="Li Z."/>
            <person name="Liu J."/>
            <person name="Liu W."/>
            <person name="Lu J."/>
            <person name="Maheshwari M."/>
            <person name="Nguyen B.-V."/>
            <person name="Okwuonu G.O."/>
            <person name="Pasternak S."/>
            <person name="Perez L.M."/>
            <person name="Plopper F.J.H."/>
            <person name="Santibanez J."/>
            <person name="Shen H."/>
            <person name="Tabor P.E."/>
            <person name="Verduzco D."/>
            <person name="Waldron L."/>
            <person name="Wang Q."/>
            <person name="Williams G.A."/>
            <person name="Zhang J."/>
            <person name="Zhou J."/>
            <person name="Allen C.C."/>
            <person name="Amin A.G."/>
            <person name="Anyalebechi V."/>
            <person name="Bailey M."/>
            <person name="Barbaria J.A."/>
            <person name="Bimage K.E."/>
            <person name="Bryant N.P."/>
            <person name="Burch P.E."/>
            <person name="Burkett C.E."/>
            <person name="Burrell K.L."/>
            <person name="Calderon E."/>
            <person name="Cardenas V."/>
            <person name="Carter K."/>
            <person name="Casias K."/>
            <person name="Cavazos I."/>
            <person name="Cavazos S.R."/>
            <person name="Ceasar H."/>
            <person name="Chacko J."/>
            <person name="Chan S.N."/>
            <person name="Chavez D."/>
            <person name="Christopoulos C."/>
            <person name="Chu J."/>
            <person name="Cockrell R."/>
            <person name="Cox C.D."/>
            <person name="Dang M."/>
            <person name="Dathorne S.R."/>
            <person name="David R."/>
            <person name="Davis C.M."/>
            <person name="Davy-Carroll L."/>
            <person name="Deshazo D.R."/>
            <person name="Donlin J.E."/>
            <person name="D'Souza L."/>
            <person name="Eaves K.A."/>
            <person name="Egan A."/>
            <person name="Emery-Cohen A.J."/>
            <person name="Escotto M."/>
            <person name="Flagg N."/>
            <person name="Forbes L.D."/>
            <person name="Gabisi A.M."/>
            <person name="Garza M."/>
            <person name="Hamilton C."/>
            <person name="Henderson N."/>
            <person name="Hernandez O."/>
            <person name="Hines S."/>
            <person name="Hogues M.E."/>
            <person name="Huang M."/>
            <person name="Idlebird D.G."/>
            <person name="Johnson R."/>
            <person name="Jolivet A."/>
            <person name="Jones S."/>
            <person name="Kagan R."/>
            <person name="King L.M."/>
            <person name="Leal B."/>
            <person name="Lebow H."/>
            <person name="Lee S."/>
            <person name="LeVan J.M."/>
            <person name="Lewis L.C."/>
            <person name="London P."/>
            <person name="Lorensuhewa L.M."/>
            <person name="Loulseged H."/>
            <person name="Lovett D.A."/>
            <person name="Lucier A."/>
            <person name="Lucier R.L."/>
            <person name="Ma J."/>
            <person name="Madu R.C."/>
            <person name="Mapua P."/>
            <person name="Martindale A.D."/>
            <person name="Martinez E."/>
            <person name="Massey E."/>
            <person name="Mawhiney S."/>
            <person name="Meador M.G."/>
            <person name="Mendez S."/>
            <person name="Mercado C."/>
            <person name="Mercado I.C."/>
            <person name="Merritt C.E."/>
            <person name="Miner Z.L."/>
            <person name="Minja E."/>
            <person name="Mitchell T."/>
            <person name="Mohabbat F."/>
            <person name="Mohabbat K."/>
            <person name="Montgomery B."/>
            <person name="Moore N."/>
            <person name="Morris S."/>
            <person name="Munidasa M."/>
            <person name="Ngo R.N."/>
            <person name="Nguyen N.B."/>
            <person name="Nickerson E."/>
            <person name="Nwaokelemeh O.O."/>
            <person name="Nwokenkwo S."/>
            <person name="Obregon M."/>
            <person name="Oguh M."/>
            <person name="Oragunye N."/>
            <person name="Oviedo R.J."/>
            <person name="Parish B.J."/>
            <person name="Parker D.N."/>
            <person name="Parrish J."/>
            <person name="Parks K.L."/>
            <person name="Paul H.A."/>
            <person name="Payton B.A."/>
            <person name="Perez A."/>
            <person name="Perrin W."/>
            <person name="Pickens A."/>
            <person name="Primus E.L."/>
            <person name="Pu L.-L."/>
            <person name="Puazo M."/>
            <person name="Quiles M.M."/>
            <person name="Quiroz J.B."/>
            <person name="Rabata D."/>
            <person name="Reeves K."/>
            <person name="Ruiz S.J."/>
            <person name="Shao H."/>
            <person name="Sisson I."/>
            <person name="Sonaike T."/>
            <person name="Sorelle R.P."/>
            <person name="Sutton A.E."/>
            <person name="Svatek A.F."/>
            <person name="Svetz L.A."/>
            <person name="Tamerisa K.S."/>
            <person name="Taylor T.R."/>
            <person name="Teague B."/>
            <person name="Thomas N."/>
            <person name="Thorn R.D."/>
            <person name="Trejos Z.Y."/>
            <person name="Trevino B.K."/>
            <person name="Ukegbu O.N."/>
            <person name="Urban J.B."/>
            <person name="Vasquez L.I."/>
            <person name="Vera V.A."/>
            <person name="Villasana D.M."/>
            <person name="Wang L."/>
            <person name="Ward-Moore S."/>
            <person name="Warren J.T."/>
            <person name="Wei X."/>
            <person name="White F."/>
            <person name="Williamson A.L."/>
            <person name="Wleczyk R."/>
            <person name="Wooden H.S."/>
            <person name="Wooden S.H."/>
            <person name="Yen J."/>
            <person name="Yoon L."/>
            <person name="Yoon V."/>
            <person name="Zorrilla S.E."/>
            <person name="Nelson D."/>
            <person name="Kucherlapati R."/>
            <person name="Weinstock G."/>
            <person name="Gibbs R.A."/>
        </authorList>
    </citation>
    <scope>NUCLEOTIDE SEQUENCE [LARGE SCALE GENOMIC DNA]</scope>
</reference>
<reference key="3">
    <citation type="submission" date="2005-07" db="EMBL/GenBank/DDBJ databases">
        <authorList>
            <person name="Mural R.J."/>
            <person name="Istrail S."/>
            <person name="Sutton G.G."/>
            <person name="Florea L."/>
            <person name="Halpern A.L."/>
            <person name="Mobarry C.M."/>
            <person name="Lippert R."/>
            <person name="Walenz B."/>
            <person name="Shatkay H."/>
            <person name="Dew I."/>
            <person name="Miller J.R."/>
            <person name="Flanigan M.J."/>
            <person name="Edwards N.J."/>
            <person name="Bolanos R."/>
            <person name="Fasulo D."/>
            <person name="Halldorsson B.V."/>
            <person name="Hannenhalli S."/>
            <person name="Turner R."/>
            <person name="Yooseph S."/>
            <person name="Lu F."/>
            <person name="Nusskern D.R."/>
            <person name="Shue B.C."/>
            <person name="Zheng X.H."/>
            <person name="Zhong F."/>
            <person name="Delcher A.L."/>
            <person name="Huson D.H."/>
            <person name="Kravitz S.A."/>
            <person name="Mouchard L."/>
            <person name="Reinert K."/>
            <person name="Remington K.A."/>
            <person name="Clark A.G."/>
            <person name="Waterman M.S."/>
            <person name="Eichler E.E."/>
            <person name="Adams M.D."/>
            <person name="Hunkapiller M.W."/>
            <person name="Myers E.W."/>
            <person name="Venter J.C."/>
        </authorList>
    </citation>
    <scope>NUCLEOTIDE SEQUENCE [LARGE SCALE GENOMIC DNA]</scope>
</reference>
<reference key="4">
    <citation type="journal article" date="2004" name="Genome Res.">
        <title>The status, quality, and expansion of the NIH full-length cDNA project: the Mammalian Gene Collection (MGC).</title>
        <authorList>
            <consortium name="The MGC Project Team"/>
        </authorList>
    </citation>
    <scope>NUCLEOTIDE SEQUENCE [LARGE SCALE MRNA]</scope>
    <source>
        <tissue>Placenta</tissue>
    </source>
</reference>
<reference key="5">
    <citation type="journal article" date="2009" name="Science">
        <title>Lysine acetylation targets protein complexes and co-regulates major cellular functions.</title>
        <authorList>
            <person name="Choudhary C."/>
            <person name="Kumar C."/>
            <person name="Gnad F."/>
            <person name="Nielsen M.L."/>
            <person name="Rehman M."/>
            <person name="Walther T.C."/>
            <person name="Olsen J.V."/>
            <person name="Mann M."/>
        </authorList>
    </citation>
    <scope>ACETYLATION [LARGE SCALE ANALYSIS] AT LYS-24</scope>
    <scope>IDENTIFICATION BY MASS SPECTROMETRY [LARGE SCALE ANALYSIS]</scope>
</reference>
<reference key="6">
    <citation type="journal article" date="2011" name="BMC Syst. Biol.">
        <title>Initial characterization of the human central proteome.</title>
        <authorList>
            <person name="Burkard T.R."/>
            <person name="Planyavsky M."/>
            <person name="Kaupe I."/>
            <person name="Breitwieser F.P."/>
            <person name="Buerckstuemmer T."/>
            <person name="Bennett K.L."/>
            <person name="Superti-Furga G."/>
            <person name="Colinge J."/>
        </authorList>
    </citation>
    <scope>IDENTIFICATION BY MASS SPECTROMETRY [LARGE SCALE ANALYSIS]</scope>
</reference>
<reference key="7">
    <citation type="journal article" date="2011" name="Genes Dev.">
        <title>An ARL3-UNC119-RP2 GTPase cycle targets myristoylated NPHP3 to the primary cilium.</title>
        <authorList>
            <person name="Wright K.J."/>
            <person name="Baye L.M."/>
            <person name="Olivier-Mason A."/>
            <person name="Mukhopadhyay S."/>
            <person name="Sang L."/>
            <person name="Kwong M."/>
            <person name="Wang W."/>
            <person name="Pretorius P.R."/>
            <person name="Sheffield V.C."/>
            <person name="Sengupta P."/>
            <person name="Slusarski D.C."/>
            <person name="Jackson P.K."/>
        </authorList>
    </citation>
    <scope>FUNCTION</scope>
    <scope>LIPID-BINDING</scope>
    <scope>SUBCELLULAR LOCATION</scope>
    <scope>INTERACTION WITH NPHP3; CYS1 AND MACIR</scope>
    <scope>IDENTIFICATION IN A COMPLEX WITH ARL3 AND RP2</scope>
    <scope>MUTAGENESIS OF PHE-144; PHE-148 AND PHE-207</scope>
</reference>
<reference key="8">
    <citation type="journal article" date="2012" name="Proc. Natl. Acad. Sci. U.S.A.">
        <title>N-terminal acetylome analyses and functional insights of the N-terminal acetyltransferase NatB.</title>
        <authorList>
            <person name="Van Damme P."/>
            <person name="Lasa M."/>
            <person name="Polevoda B."/>
            <person name="Gazquez C."/>
            <person name="Elosegui-Artola A."/>
            <person name="Kim D.S."/>
            <person name="De Juan-Pardo E."/>
            <person name="Demeyer K."/>
            <person name="Hole K."/>
            <person name="Larrea E."/>
            <person name="Timmerman E."/>
            <person name="Prieto J."/>
            <person name="Arnesen T."/>
            <person name="Sherman F."/>
            <person name="Gevaert K."/>
            <person name="Aldabe R."/>
        </authorList>
    </citation>
    <scope>ACETYLATION [LARGE SCALE ANALYSIS] AT SER-2</scope>
    <scope>CLEAVAGE OF INITIATOR METHIONINE [LARGE SCALE ANALYSIS]</scope>
    <scope>IDENTIFICATION BY MASS SPECTROMETRY [LARGE SCALE ANALYSIS]</scope>
</reference>
<reference key="9">
    <citation type="journal article" date="2014" name="J. Proteomics">
        <title>An enzyme assisted RP-RPLC approach for in-depth analysis of human liver phosphoproteome.</title>
        <authorList>
            <person name="Bian Y."/>
            <person name="Song C."/>
            <person name="Cheng K."/>
            <person name="Dong M."/>
            <person name="Wang F."/>
            <person name="Huang J."/>
            <person name="Sun D."/>
            <person name="Wang L."/>
            <person name="Ye M."/>
            <person name="Zou H."/>
        </authorList>
    </citation>
    <scope>IDENTIFICATION BY MASS SPECTROMETRY [LARGE SCALE ANALYSIS]</scope>
    <source>
        <tissue>Liver</tissue>
    </source>
</reference>
<comment type="function">
    <text evidence="3">Myristoyl-binding protein that acts as a cargo adapter: specifically binds the myristoyl moiety of a subset of N-terminally myristoylated proteins and is required for their localization. Binds myristoylated NPHP3 and plays a key role in localization of NPHP3 to the primary cilium membrane. Does not bind all myristoylated proteins. Probably plays a role in trafficking proteins in photoreceptor cells.</text>
</comment>
<comment type="subunit">
    <text evidence="3">Found in a complex with ARL3, RP2 and UNC119B; RP2 induces hydrolysis of GTP ARL3 in the complex, leading to the release of UNC119B. Interacts with NPHP3 (when myristoylated). Interacts with CYS1 (when myristoylated). Interacts with MACIR; interaction only takes place when UNC119B is not liganded with myristoylated proteins.</text>
</comment>
<comment type="interaction">
    <interactant intactId="EBI-8045435">
        <id>A6NIH7</id>
    </interactant>
    <interactant intactId="EBI-2804263">
        <id>Q7Z494</id>
        <label>NPHP3</label>
    </interactant>
    <organismsDiffer>false</organismsDiffer>
    <experiments>3</experiments>
</comment>
<comment type="subcellular location">
    <subcellularLocation>
        <location evidence="3">Cell projection</location>
        <location evidence="3">Cilium</location>
    </subcellularLocation>
    <text>Enriched at the transition zone and extended into the proximal end of the cilium.</text>
</comment>
<comment type="domain">
    <text evidence="3">Adopts an immunoglobulin-like beta-sandwich fold forming a hydrophobic cavity that capture N-terminally myristoylated target peptides. Phe residues within the hydrophobic beta sandwich are required for myristate binding (PubMed:22085962).</text>
</comment>
<comment type="similarity">
    <text evidence="4">Belongs to the PDE6D/unc-119 family.</text>
</comment>
<gene>
    <name type="primary">UNC119B</name>
</gene>
<proteinExistence type="evidence at protein level"/>
<organism>
    <name type="scientific">Homo sapiens</name>
    <name type="common">Human</name>
    <dbReference type="NCBI Taxonomy" id="9606"/>
    <lineage>
        <taxon>Eukaryota</taxon>
        <taxon>Metazoa</taxon>
        <taxon>Chordata</taxon>
        <taxon>Craniata</taxon>
        <taxon>Vertebrata</taxon>
        <taxon>Euteleostomi</taxon>
        <taxon>Mammalia</taxon>
        <taxon>Eutheria</taxon>
        <taxon>Euarchontoglires</taxon>
        <taxon>Primates</taxon>
        <taxon>Haplorrhini</taxon>
        <taxon>Catarrhini</taxon>
        <taxon>Hominidae</taxon>
        <taxon>Homo</taxon>
    </lineage>
</organism>
<keyword id="KW-0002">3D-structure</keyword>
<keyword id="KW-0007">Acetylation</keyword>
<keyword id="KW-0966">Cell projection</keyword>
<keyword id="KW-0969">Cilium</keyword>
<keyword id="KW-0970">Cilium biogenesis/degradation</keyword>
<keyword id="KW-0446">Lipid-binding</keyword>
<keyword id="KW-0653">Protein transport</keyword>
<keyword id="KW-1267">Proteomics identification</keyword>
<keyword id="KW-1185">Reference proteome</keyword>
<keyword id="KW-0813">Transport</keyword>
<accession>A6NIH7</accession>
<dbReference type="EMBL" id="AK126367">
    <property type="status" value="NOT_ANNOTATED_CDS"/>
    <property type="molecule type" value="mRNA"/>
</dbReference>
<dbReference type="EMBL" id="AC069234">
    <property type="status" value="NOT_ANNOTATED_CDS"/>
    <property type="molecule type" value="Genomic_DNA"/>
</dbReference>
<dbReference type="EMBL" id="CH471054">
    <property type="protein sequence ID" value="EAW98216.1"/>
    <property type="molecule type" value="Genomic_DNA"/>
</dbReference>
<dbReference type="EMBL" id="BC004815">
    <property type="status" value="NOT_ANNOTATED_CDS"/>
    <property type="molecule type" value="mRNA"/>
</dbReference>
<dbReference type="CCDS" id="CCDS31914.1"/>
<dbReference type="RefSeq" id="NP_001074002.1">
    <property type="nucleotide sequence ID" value="NM_001080533.3"/>
</dbReference>
<dbReference type="PDB" id="7OK6">
    <property type="method" value="X-ray"/>
    <property type="resolution" value="1.95 A"/>
    <property type="chains" value="AAA/HHH=66-251"/>
</dbReference>
<dbReference type="PDB" id="7OK7">
    <property type="method" value="X-ray"/>
    <property type="resolution" value="3.15 A"/>
    <property type="chains" value="G/H/I/J/K/L=66-248"/>
</dbReference>
<dbReference type="PDBsum" id="7OK6"/>
<dbReference type="PDBsum" id="7OK7"/>
<dbReference type="SMR" id="A6NIH7"/>
<dbReference type="BioGRID" id="124237">
    <property type="interactions" value="56"/>
</dbReference>
<dbReference type="DIP" id="DIP-61819N"/>
<dbReference type="FunCoup" id="A6NIH7">
    <property type="interactions" value="594"/>
</dbReference>
<dbReference type="IntAct" id="A6NIH7">
    <property type="interactions" value="25"/>
</dbReference>
<dbReference type="MINT" id="A6NIH7"/>
<dbReference type="STRING" id="9606.ENSP00000344942"/>
<dbReference type="GlyGen" id="A6NIH7">
    <property type="glycosylation" value="1 site, 1 O-linked glycan (1 site)"/>
</dbReference>
<dbReference type="iPTMnet" id="A6NIH7"/>
<dbReference type="PhosphoSitePlus" id="A6NIH7"/>
<dbReference type="BioMuta" id="UNC119B"/>
<dbReference type="jPOST" id="A6NIH7"/>
<dbReference type="MassIVE" id="A6NIH7"/>
<dbReference type="PaxDb" id="9606-ENSP00000344942"/>
<dbReference type="PeptideAtlas" id="A6NIH7"/>
<dbReference type="ProteomicsDB" id="1270"/>
<dbReference type="Pumba" id="A6NIH7"/>
<dbReference type="Antibodypedia" id="53998">
    <property type="antibodies" value="61 antibodies from 14 providers"/>
</dbReference>
<dbReference type="DNASU" id="84747"/>
<dbReference type="Ensembl" id="ENST00000344651.5">
    <property type="protein sequence ID" value="ENSP00000344942.4"/>
    <property type="gene ID" value="ENSG00000175970.12"/>
</dbReference>
<dbReference type="GeneID" id="84747"/>
<dbReference type="KEGG" id="hsa:84747"/>
<dbReference type="MANE-Select" id="ENST00000344651.5">
    <property type="protein sequence ID" value="ENSP00000344942.4"/>
    <property type="RefSeq nucleotide sequence ID" value="NM_001080533.3"/>
    <property type="RefSeq protein sequence ID" value="NP_001074002.1"/>
</dbReference>
<dbReference type="UCSC" id="uc001tyz.4">
    <property type="organism name" value="human"/>
</dbReference>
<dbReference type="AGR" id="HGNC:16488"/>
<dbReference type="CTD" id="84747"/>
<dbReference type="DisGeNET" id="84747"/>
<dbReference type="GeneCards" id="UNC119B"/>
<dbReference type="HGNC" id="HGNC:16488">
    <property type="gene designation" value="UNC119B"/>
</dbReference>
<dbReference type="HPA" id="ENSG00000175970">
    <property type="expression patterns" value="Low tissue specificity"/>
</dbReference>
<dbReference type="MIM" id="620513">
    <property type="type" value="gene"/>
</dbReference>
<dbReference type="neXtProt" id="NX_A6NIH7"/>
<dbReference type="OpenTargets" id="ENSG00000175970"/>
<dbReference type="PharmGKB" id="PA38152"/>
<dbReference type="VEuPathDB" id="HostDB:ENSG00000175970"/>
<dbReference type="eggNOG" id="KOG4037">
    <property type="taxonomic scope" value="Eukaryota"/>
</dbReference>
<dbReference type="GeneTree" id="ENSGT00390000014595"/>
<dbReference type="HOGENOM" id="CLU_088825_0_0_1"/>
<dbReference type="InParanoid" id="A6NIH7"/>
<dbReference type="OMA" id="IYNIEFT"/>
<dbReference type="OrthoDB" id="10248777at2759"/>
<dbReference type="PAN-GO" id="A6NIH7">
    <property type="GO annotations" value="5 GO annotations based on evolutionary models"/>
</dbReference>
<dbReference type="PhylomeDB" id="A6NIH7"/>
<dbReference type="TreeFam" id="TF314474"/>
<dbReference type="PathwayCommons" id="A6NIH7"/>
<dbReference type="Reactome" id="R-HSA-5624138">
    <property type="pathway name" value="Trafficking of myristoylated proteins to the cilium"/>
</dbReference>
<dbReference type="SignaLink" id="A6NIH7"/>
<dbReference type="BioGRID-ORCS" id="84747">
    <property type="hits" value="24 hits in 1154 CRISPR screens"/>
</dbReference>
<dbReference type="ChiTaRS" id="UNC119B">
    <property type="organism name" value="human"/>
</dbReference>
<dbReference type="GenomeRNAi" id="84747"/>
<dbReference type="Pharos" id="A6NIH7">
    <property type="development level" value="Tbio"/>
</dbReference>
<dbReference type="PRO" id="PR:A6NIH7"/>
<dbReference type="Proteomes" id="UP000005640">
    <property type="component" value="Chromosome 12"/>
</dbReference>
<dbReference type="RNAct" id="A6NIH7">
    <property type="molecule type" value="protein"/>
</dbReference>
<dbReference type="Bgee" id="ENSG00000175970">
    <property type="expression patterns" value="Expressed in ventricular zone and 100 other cell types or tissues"/>
</dbReference>
<dbReference type="GO" id="GO:0035869">
    <property type="term" value="C:ciliary transition zone"/>
    <property type="evidence" value="ECO:0000314"/>
    <property type="project" value="UniProtKB"/>
</dbReference>
<dbReference type="GO" id="GO:0005929">
    <property type="term" value="C:cilium"/>
    <property type="evidence" value="ECO:0000318"/>
    <property type="project" value="GO_Central"/>
</dbReference>
<dbReference type="GO" id="GO:0005829">
    <property type="term" value="C:cytosol"/>
    <property type="evidence" value="ECO:0000304"/>
    <property type="project" value="Reactome"/>
</dbReference>
<dbReference type="GO" id="GO:0008289">
    <property type="term" value="F:lipid binding"/>
    <property type="evidence" value="ECO:0000314"/>
    <property type="project" value="UniProtKB"/>
</dbReference>
<dbReference type="GO" id="GO:0060271">
    <property type="term" value="P:cilium assembly"/>
    <property type="evidence" value="ECO:0000315"/>
    <property type="project" value="UniProtKB"/>
</dbReference>
<dbReference type="GO" id="GO:0042953">
    <property type="term" value="P:lipoprotein transport"/>
    <property type="evidence" value="ECO:0000314"/>
    <property type="project" value="UniProtKB"/>
</dbReference>
<dbReference type="GO" id="GO:0007399">
    <property type="term" value="P:nervous system development"/>
    <property type="evidence" value="ECO:0000318"/>
    <property type="project" value="GO_Central"/>
</dbReference>
<dbReference type="FunFam" id="2.70.50.40:FF:000001">
    <property type="entry name" value="protein unc-119 homolog A"/>
    <property type="match status" value="1"/>
</dbReference>
<dbReference type="Gene3D" id="2.70.50.40">
    <property type="entry name" value="GMP phosphodiesterase, delta subunit"/>
    <property type="match status" value="1"/>
</dbReference>
<dbReference type="InterPro" id="IPR014756">
    <property type="entry name" value="Ig_E-set"/>
</dbReference>
<dbReference type="InterPro" id="IPR051519">
    <property type="entry name" value="PDE6D_unc-119_myristoyl-bd"/>
</dbReference>
<dbReference type="InterPro" id="IPR008015">
    <property type="entry name" value="PDED_dom"/>
</dbReference>
<dbReference type="InterPro" id="IPR037036">
    <property type="entry name" value="PDED_dom_sf"/>
</dbReference>
<dbReference type="PANTHER" id="PTHR12951:SF3">
    <property type="entry name" value="PROTEIN UNC-119 HOMOLOG B"/>
    <property type="match status" value="1"/>
</dbReference>
<dbReference type="PANTHER" id="PTHR12951">
    <property type="entry name" value="RETINAL PROTEIN 4"/>
    <property type="match status" value="1"/>
</dbReference>
<dbReference type="Pfam" id="PF05351">
    <property type="entry name" value="GMP_PDE_delta"/>
    <property type="match status" value="1"/>
</dbReference>
<dbReference type="SUPFAM" id="SSF81296">
    <property type="entry name" value="E set domains"/>
    <property type="match status" value="1"/>
</dbReference>
<protein>
    <recommendedName>
        <fullName>Protein unc-119 homolog B</fullName>
    </recommendedName>
</protein>